<name>PPIA_CHLAE</name>
<dbReference type="EC" id="5.2.1.8" evidence="2"/>
<dbReference type="EMBL" id="AF023860">
    <property type="protein sequence ID" value="AAB81960.1"/>
    <property type="molecule type" value="mRNA"/>
</dbReference>
<dbReference type="EMBL" id="DQ251282">
    <property type="protein sequence ID" value="ABB77882.1"/>
    <property type="molecule type" value="Genomic_DNA"/>
</dbReference>
<dbReference type="PDB" id="5HSV">
    <property type="method" value="X-ray"/>
    <property type="resolution" value="1.50 A"/>
    <property type="chains" value="A/B/C/D=1-165"/>
</dbReference>
<dbReference type="PDB" id="9BGH">
    <property type="method" value="X-ray"/>
    <property type="resolution" value="1.65 A"/>
    <property type="chains" value="B/D=1-165"/>
</dbReference>
<dbReference type="PDBsum" id="5HSV"/>
<dbReference type="PDBsum" id="9BGH"/>
<dbReference type="BMRB" id="P62938"/>
<dbReference type="SMR" id="P62938"/>
<dbReference type="GlyCosmos" id="P62938">
    <property type="glycosylation" value="1 site, No reported glycans"/>
</dbReference>
<dbReference type="GO" id="GO:0005737">
    <property type="term" value="C:cytoplasm"/>
    <property type="evidence" value="ECO:0000250"/>
    <property type="project" value="UniProtKB"/>
</dbReference>
<dbReference type="GO" id="GO:0005829">
    <property type="term" value="C:cytosol"/>
    <property type="evidence" value="ECO:0000250"/>
    <property type="project" value="UniProtKB"/>
</dbReference>
<dbReference type="GO" id="GO:0005576">
    <property type="term" value="C:extracellular region"/>
    <property type="evidence" value="ECO:0000250"/>
    <property type="project" value="UniProtKB"/>
</dbReference>
<dbReference type="GO" id="GO:0005634">
    <property type="term" value="C:nucleus"/>
    <property type="evidence" value="ECO:0000250"/>
    <property type="project" value="UniProtKB"/>
</dbReference>
<dbReference type="GO" id="GO:0016018">
    <property type="term" value="F:cyclosporin A binding"/>
    <property type="evidence" value="ECO:0007669"/>
    <property type="project" value="TreeGrafter"/>
</dbReference>
<dbReference type="GO" id="GO:1904399">
    <property type="term" value="F:heparan sulfate binding"/>
    <property type="evidence" value="ECO:0000250"/>
    <property type="project" value="UniProtKB"/>
</dbReference>
<dbReference type="GO" id="GO:0005178">
    <property type="term" value="F:integrin binding"/>
    <property type="evidence" value="ECO:0000250"/>
    <property type="project" value="UniProtKB"/>
</dbReference>
<dbReference type="GO" id="GO:0003755">
    <property type="term" value="F:peptidyl-prolyl cis-trans isomerase activity"/>
    <property type="evidence" value="ECO:0000250"/>
    <property type="project" value="UniProtKB"/>
</dbReference>
<dbReference type="GO" id="GO:0032148">
    <property type="term" value="P:activation of protein kinase B activity"/>
    <property type="evidence" value="ECO:0000250"/>
    <property type="project" value="UniProtKB"/>
</dbReference>
<dbReference type="GO" id="GO:0006915">
    <property type="term" value="P:apoptotic process"/>
    <property type="evidence" value="ECO:0000250"/>
    <property type="project" value="UniProtKB"/>
</dbReference>
<dbReference type="GO" id="GO:0060352">
    <property type="term" value="P:cell adhesion molecule production"/>
    <property type="evidence" value="ECO:0000250"/>
    <property type="project" value="UniProtKB"/>
</dbReference>
<dbReference type="GO" id="GO:0034599">
    <property type="term" value="P:cellular response to oxidative stress"/>
    <property type="evidence" value="ECO:0000250"/>
    <property type="project" value="UniProtKB"/>
</dbReference>
<dbReference type="GO" id="GO:0042118">
    <property type="term" value="P:endothelial cell activation"/>
    <property type="evidence" value="ECO:0000250"/>
    <property type="project" value="UniProtKB"/>
</dbReference>
<dbReference type="GO" id="GO:0030595">
    <property type="term" value="P:leukocyte chemotaxis"/>
    <property type="evidence" value="ECO:0000250"/>
    <property type="project" value="UniProtKB"/>
</dbReference>
<dbReference type="GO" id="GO:1902176">
    <property type="term" value="P:negative regulation of oxidative stress-induced intrinsic apoptotic signaling pathway"/>
    <property type="evidence" value="ECO:0000250"/>
    <property type="project" value="UniProtKB"/>
</dbReference>
<dbReference type="GO" id="GO:0061944">
    <property type="term" value="P:negative regulation of protein K48-linked ubiquitination"/>
    <property type="evidence" value="ECO:0000250"/>
    <property type="project" value="UniProtKB"/>
</dbReference>
<dbReference type="GO" id="GO:0006469">
    <property type="term" value="P:negative regulation of protein kinase activity"/>
    <property type="evidence" value="ECO:0000250"/>
    <property type="project" value="UniProtKB"/>
</dbReference>
<dbReference type="GO" id="GO:0001933">
    <property type="term" value="P:negative regulation of protein phosphorylation"/>
    <property type="evidence" value="ECO:0000250"/>
    <property type="project" value="UniProtKB"/>
</dbReference>
<dbReference type="GO" id="GO:0032873">
    <property type="term" value="P:negative regulation of stress-activated MAPK cascade"/>
    <property type="evidence" value="ECO:0000250"/>
    <property type="project" value="UniProtKB"/>
</dbReference>
<dbReference type="GO" id="GO:0030593">
    <property type="term" value="P:neutrophil chemotaxis"/>
    <property type="evidence" value="ECO:0000250"/>
    <property type="project" value="UniProtKB"/>
</dbReference>
<dbReference type="GO" id="GO:0030168">
    <property type="term" value="P:platelet activation"/>
    <property type="evidence" value="ECO:0000250"/>
    <property type="project" value="UniProtKB"/>
</dbReference>
<dbReference type="GO" id="GO:0070527">
    <property type="term" value="P:platelet aggregation"/>
    <property type="evidence" value="ECO:0000250"/>
    <property type="project" value="UniProtKB"/>
</dbReference>
<dbReference type="GO" id="GO:0043410">
    <property type="term" value="P:positive regulation of MAPK cascade"/>
    <property type="evidence" value="ECO:0000250"/>
    <property type="project" value="UniProtKB"/>
</dbReference>
<dbReference type="GO" id="GO:0051092">
    <property type="term" value="P:positive regulation of NF-kappaB transcription factor activity"/>
    <property type="evidence" value="ECO:0000250"/>
    <property type="project" value="UniProtKB"/>
</dbReference>
<dbReference type="GO" id="GO:0001934">
    <property type="term" value="P:positive regulation of protein phosphorylation"/>
    <property type="evidence" value="ECO:0000250"/>
    <property type="project" value="UniProtKB"/>
</dbReference>
<dbReference type="GO" id="GO:0006457">
    <property type="term" value="P:protein folding"/>
    <property type="evidence" value="ECO:0007669"/>
    <property type="project" value="InterPro"/>
</dbReference>
<dbReference type="GO" id="GO:0000413">
    <property type="term" value="P:protein peptidyl-prolyl isomerization"/>
    <property type="evidence" value="ECO:0000250"/>
    <property type="project" value="UniProtKB"/>
</dbReference>
<dbReference type="GO" id="GO:2001233">
    <property type="term" value="P:regulation of apoptotic signaling pathway"/>
    <property type="evidence" value="ECO:0000250"/>
    <property type="project" value="UniProtKB"/>
</dbReference>
<dbReference type="GO" id="GO:0045069">
    <property type="term" value="P:regulation of viral genome replication"/>
    <property type="evidence" value="ECO:0000250"/>
    <property type="project" value="UniProtKB"/>
</dbReference>
<dbReference type="CDD" id="cd01926">
    <property type="entry name" value="cyclophilin_ABH_like"/>
    <property type="match status" value="1"/>
</dbReference>
<dbReference type="FunFam" id="2.40.100.10:FF:000011">
    <property type="entry name" value="Peptidyl-prolyl cis-trans isomerase A"/>
    <property type="match status" value="1"/>
</dbReference>
<dbReference type="Gene3D" id="2.40.100.10">
    <property type="entry name" value="Cyclophilin-like"/>
    <property type="match status" value="1"/>
</dbReference>
<dbReference type="InterPro" id="IPR029000">
    <property type="entry name" value="Cyclophilin-like_dom_sf"/>
</dbReference>
<dbReference type="InterPro" id="IPR024936">
    <property type="entry name" value="Cyclophilin-type_PPIase"/>
</dbReference>
<dbReference type="InterPro" id="IPR020892">
    <property type="entry name" value="Cyclophilin-type_PPIase_CS"/>
</dbReference>
<dbReference type="InterPro" id="IPR002130">
    <property type="entry name" value="Cyclophilin-type_PPIase_dom"/>
</dbReference>
<dbReference type="PANTHER" id="PTHR11071">
    <property type="entry name" value="PEPTIDYL-PROLYL CIS-TRANS ISOMERASE"/>
    <property type="match status" value="1"/>
</dbReference>
<dbReference type="PANTHER" id="PTHR11071:SF490">
    <property type="entry name" value="PEPTIDYL-PROLYL CIS-TRANS ISOMERASE A"/>
    <property type="match status" value="1"/>
</dbReference>
<dbReference type="Pfam" id="PF00160">
    <property type="entry name" value="Pro_isomerase"/>
    <property type="match status" value="1"/>
</dbReference>
<dbReference type="PIRSF" id="PIRSF001467">
    <property type="entry name" value="Peptidylpro_ismrse"/>
    <property type="match status" value="1"/>
</dbReference>
<dbReference type="PRINTS" id="PR00153">
    <property type="entry name" value="CSAPPISMRASE"/>
</dbReference>
<dbReference type="SUPFAM" id="SSF50891">
    <property type="entry name" value="Cyclophilin-like"/>
    <property type="match status" value="1"/>
</dbReference>
<dbReference type="PROSITE" id="PS00170">
    <property type="entry name" value="CSA_PPIASE_1"/>
    <property type="match status" value="1"/>
</dbReference>
<dbReference type="PROSITE" id="PS50072">
    <property type="entry name" value="CSA_PPIASE_2"/>
    <property type="match status" value="1"/>
</dbReference>
<proteinExistence type="evidence at protein level"/>
<comment type="function">
    <text evidence="1 2">Catalyzes the cis-trans isomerization of proline imidic peptide bonds in oligopeptides (By similarity). Exerts a strong chemotactic effect on leukocytes partly through activation of one of its membrane receptors BSG/CD147, initiating a signaling cascade that culminates in MAPK/ERK activation (By similarity). Activates endothelial cells (ECs) in a proinflammatory manner by stimulating activation of NF-kappa-B and ERK, JNK and p38 MAP-kinases and by inducing expression of adhesion molecules including SELE and VCAM1 (By similarity). Induces apoptosis in ECs by promoting the FOXO1-dependent expression of CCL2 and BCL2L11 which are involved in EC chemotaxis and apoptosis (By similarity). In response to oxidative stress, initiates proapoptotic and antiapoptotic signaling in ECs via activation of NF-kappa-B and AKT1 and up-regulation of antiapoptotic protein BCL2 (By similarity). Negatively regulates MAP3K5/ASK1 kinase activity, autophosphorylation and oxidative stress-induced apoptosis mediated by MAP3K5/ASK1 (By similarity). Necessary for the assembly of TARDBP in heterogeneous nuclear ribonucleoprotein (hnRNP) complexes and regulates TARDBP binding to RNA UG repeats and TARDBP-dependent expression of HDAC6, ATG7 and VCP which are involved in clearance of protein aggregates (By similarity). Plays an important role in platelet activation and aggregation (By similarity). Regulates calcium mobilization and integrin ITGA2B:ITGB3 bidirectional signaling via increased ROS production as well as by facilitating the interaction between integrin and the cell cytoskeleton (By similarity). Binds heparan sulfate glycosaminoglycans (By similarity).</text>
</comment>
<comment type="catalytic activity">
    <reaction evidence="2">
        <text>[protein]-peptidylproline (omega=180) = [protein]-peptidylproline (omega=0)</text>
        <dbReference type="Rhea" id="RHEA:16237"/>
        <dbReference type="Rhea" id="RHEA-COMP:10747"/>
        <dbReference type="Rhea" id="RHEA-COMP:10748"/>
        <dbReference type="ChEBI" id="CHEBI:83833"/>
        <dbReference type="ChEBI" id="CHEBI:83834"/>
        <dbReference type="EC" id="5.2.1.8"/>
    </reaction>
</comment>
<comment type="activity regulation">
    <text evidence="2">Binds cyclosporin A (CsA). CsA mediates some of its effects via an inhibitory action on PPIase.</text>
</comment>
<comment type="subunit">
    <text evidence="1 2">Interacts with protein phosphatase PPP3CA/calcineurin A (By similarity). Interacts with isoform 2 of BSG/CD147 (By similarity). Interacts with FOXO1; the interaction promotes FOXO1 dephosphorylation, nuclear accumulation and transcriptional activity (By similarity). Interacts with integrin ITGA2B:ITGB3; the interaction is ROS and peptidyl-prolyl cis-trans isomerase (PPIase) activity-dependent and is increased in the presence of thrombin (By similarity). Interacts with MAP3K5 (By similarity). Interacts with TARDBP; the interaction is dependent on the RNA-binding activity of TARDBP and the PPIase activity of PPIA/CYPA and the acetylation of PPIA/CYPA at Lys-125 favors the interaction (By similarity). Interacts with HNRNPA1, HNRNPA2B1, HNRNPC, RBMX, HNRNPK and HNRNPM (By similarity).</text>
</comment>
<comment type="subcellular location">
    <subcellularLocation>
        <location evidence="2">Cytoplasm</location>
    </subcellularLocation>
    <subcellularLocation>
        <location evidence="2">Secreted</location>
    </subcellularLocation>
    <subcellularLocation>
        <location evidence="2">Nucleus</location>
    </subcellularLocation>
    <text evidence="2">Secretion occurs in response to oxidative stress in vascular smooth muscle through a vesicular secretory pathway that involves actin remodeling and myosin II activation, and mediates ERK1/2 activation.</text>
</comment>
<comment type="PTM">
    <text evidence="2">Acetylation at Lys-125 markedly inhibits catalysis of cis to trans isomerization (By similarity). PPIA acetylation also antagonizes the immunosuppressive effects of cyclosporine by inhibiting the sequential steps of cyclosporine binding and calcineurin inhibition (By similarity). Acetylation at Lys-125 favors the interaction with TARDBP (By similarity).</text>
</comment>
<comment type="similarity">
    <text evidence="5">Belongs to the cyclophilin-type PPIase family. PPIase A subfamily.</text>
</comment>
<keyword id="KW-0002">3D-structure</keyword>
<keyword id="KW-0007">Acetylation</keyword>
<keyword id="KW-0053">Apoptosis</keyword>
<keyword id="KW-0963">Cytoplasm</keyword>
<keyword id="KW-0325">Glycoprotein</keyword>
<keyword id="KW-0413">Isomerase</keyword>
<keyword id="KW-1017">Isopeptide bond</keyword>
<keyword id="KW-0539">Nucleus</keyword>
<keyword id="KW-0597">Phosphoprotein</keyword>
<keyword id="KW-0697">Rotamase</keyword>
<keyword id="KW-0964">Secreted</keyword>
<keyword id="KW-0832">Ubl conjugation</keyword>
<sequence length="165" mass="18012">MVNPTVFFDIAVDGEPLGRVSFELFADKVPKTAENFRALSTGEKGFGYKGSCFHRIIPGFMCQGGDFTRHNGTGGKSIYGEKFEDENFILKHTGPGILSMANAGPNTNGSQFFICTAKTEWLDGKHVVFGKVKEGMNIVEAMERFGSRNGKTSKKITIADCGQLE</sequence>
<evidence type="ECO:0000250" key="1">
    <source>
        <dbReference type="UniProtKB" id="P17742"/>
    </source>
</evidence>
<evidence type="ECO:0000250" key="2">
    <source>
        <dbReference type="UniProtKB" id="P62937"/>
    </source>
</evidence>
<evidence type="ECO:0000255" key="3"/>
<evidence type="ECO:0000255" key="4">
    <source>
        <dbReference type="PROSITE-ProRule" id="PRU00156"/>
    </source>
</evidence>
<evidence type="ECO:0000305" key="5"/>
<evidence type="ECO:0007829" key="6">
    <source>
        <dbReference type="PDB" id="5HSV"/>
    </source>
</evidence>
<feature type="chain" id="PRO_0000423236" description="Peptidyl-prolyl cis-trans isomerase A">
    <location>
        <begin position="1"/>
        <end position="165"/>
    </location>
</feature>
<feature type="initiator methionine" description="Removed; alternate" evidence="2">
    <location>
        <position position="1"/>
    </location>
</feature>
<feature type="chain" id="PRO_0000064112" description="Peptidyl-prolyl cis-trans isomerase A, N-terminally processed">
    <location>
        <begin position="2"/>
        <end position="165"/>
    </location>
</feature>
<feature type="domain" description="PPIase cyclophilin-type" evidence="4">
    <location>
        <begin position="7"/>
        <end position="163"/>
    </location>
</feature>
<feature type="modified residue" description="N-acetylmethionine" evidence="2">
    <location>
        <position position="1"/>
    </location>
</feature>
<feature type="modified residue" description="N-acetylvaline; in Peptidyl-prolyl cis-trans isomerase A, N-terminally processed" evidence="2">
    <location>
        <position position="2"/>
    </location>
</feature>
<feature type="modified residue" description="N6-acetyllysine; alternate" evidence="2">
    <location>
        <position position="28"/>
    </location>
</feature>
<feature type="modified residue" description="N6-acetyllysine" evidence="2">
    <location>
        <position position="44"/>
    </location>
</feature>
<feature type="modified residue" description="N6-acetyllysine" evidence="2">
    <location>
        <position position="76"/>
    </location>
</feature>
<feature type="modified residue" description="Phosphoserine" evidence="2">
    <location>
        <position position="77"/>
    </location>
</feature>
<feature type="modified residue" description="N6-acetyllysine; alternate" evidence="2">
    <location>
        <position position="82"/>
    </location>
</feature>
<feature type="modified residue" description="Phosphothreonine" evidence="2">
    <location>
        <position position="93"/>
    </location>
</feature>
<feature type="modified residue" description="N6-acetyllysine" evidence="2">
    <location>
        <position position="125"/>
    </location>
</feature>
<feature type="modified residue" description="N6-acetyllysine" evidence="2">
    <location>
        <position position="131"/>
    </location>
</feature>
<feature type="modified residue" description="N6-acetyllysine" evidence="1">
    <location>
        <position position="133"/>
    </location>
</feature>
<feature type="glycosylation site" description="N-linked (GlcNAc...) asparagine" evidence="3">
    <location>
        <position position="108"/>
    </location>
</feature>
<feature type="cross-link" description="Glycyl lysine isopeptide (Lys-Gly) (interchain with G-Cter in SUMO2); alternate" evidence="2">
    <location>
        <position position="28"/>
    </location>
</feature>
<feature type="cross-link" description="Glycyl lysine isopeptide (Lys-Gly) (interchain with G-Cter in ubiquitin); alternate" evidence="2">
    <location>
        <position position="28"/>
    </location>
</feature>
<feature type="cross-link" description="Glycyl lysine isopeptide (Lys-Gly) (interchain with G-Cter in SUMO2); alternate" evidence="2">
    <location>
        <position position="82"/>
    </location>
</feature>
<feature type="strand" evidence="6">
    <location>
        <begin position="5"/>
        <end position="12"/>
    </location>
</feature>
<feature type="strand" evidence="6">
    <location>
        <begin position="15"/>
        <end position="24"/>
    </location>
</feature>
<feature type="turn" evidence="6">
    <location>
        <begin position="26"/>
        <end position="28"/>
    </location>
</feature>
<feature type="helix" evidence="6">
    <location>
        <begin position="30"/>
        <end position="41"/>
    </location>
</feature>
<feature type="turn" evidence="6">
    <location>
        <begin position="42"/>
        <end position="44"/>
    </location>
</feature>
<feature type="strand" evidence="6">
    <location>
        <begin position="52"/>
        <end position="57"/>
    </location>
</feature>
<feature type="turn" evidence="6">
    <location>
        <begin position="58"/>
        <end position="60"/>
    </location>
</feature>
<feature type="strand" evidence="6">
    <location>
        <begin position="61"/>
        <end position="64"/>
    </location>
</feature>
<feature type="turn" evidence="6">
    <location>
        <begin position="67"/>
        <end position="69"/>
    </location>
</feature>
<feature type="strand" evidence="6">
    <location>
        <begin position="70"/>
        <end position="73"/>
    </location>
</feature>
<feature type="strand" evidence="6">
    <location>
        <begin position="97"/>
        <end position="100"/>
    </location>
</feature>
<feature type="strand" evidence="6">
    <location>
        <begin position="112"/>
        <end position="117"/>
    </location>
</feature>
<feature type="helix" evidence="6">
    <location>
        <begin position="120"/>
        <end position="122"/>
    </location>
</feature>
<feature type="turn" evidence="6">
    <location>
        <begin position="123"/>
        <end position="125"/>
    </location>
</feature>
<feature type="strand" evidence="6">
    <location>
        <begin position="128"/>
        <end position="134"/>
    </location>
</feature>
<feature type="helix" evidence="6">
    <location>
        <begin position="136"/>
        <end position="143"/>
    </location>
</feature>
<feature type="strand" evidence="6">
    <location>
        <begin position="156"/>
        <end position="163"/>
    </location>
</feature>
<reference key="1">
    <citation type="submission" date="1997-09" db="EMBL/GenBank/DDBJ databases">
        <authorList>
            <person name="Luban J."/>
            <person name="Yin L."/>
        </authorList>
    </citation>
    <scope>NUCLEOTIDE SEQUENCE [MRNA]</scope>
    <source>
        <strain>Sabaeus</strain>
    </source>
</reference>
<reference key="2">
    <citation type="journal article" date="2006" name="Retrovirology">
        <title>Patterns of evolution of host proteins involved in retroviral pathogenesis.</title>
        <authorList>
            <person name="Ortiz M."/>
            <person name="Bleiber G."/>
            <person name="Martinez R."/>
            <person name="Kaessmann H."/>
            <person name="Telenti A."/>
        </authorList>
    </citation>
    <scope>NUCLEOTIDE SEQUENCE [GENOMIC DNA]</scope>
</reference>
<organism>
    <name type="scientific">Chlorocebus aethiops</name>
    <name type="common">Green monkey</name>
    <name type="synonym">Cercopithecus aethiops</name>
    <dbReference type="NCBI Taxonomy" id="9534"/>
    <lineage>
        <taxon>Eukaryota</taxon>
        <taxon>Metazoa</taxon>
        <taxon>Chordata</taxon>
        <taxon>Craniata</taxon>
        <taxon>Vertebrata</taxon>
        <taxon>Euteleostomi</taxon>
        <taxon>Mammalia</taxon>
        <taxon>Eutheria</taxon>
        <taxon>Euarchontoglires</taxon>
        <taxon>Primates</taxon>
        <taxon>Haplorrhini</taxon>
        <taxon>Catarrhini</taxon>
        <taxon>Cercopithecidae</taxon>
        <taxon>Cercopithecinae</taxon>
        <taxon>Chlorocebus</taxon>
    </lineage>
</organism>
<accession>P62938</accession>
<accession>P05092</accession>
<accession>Q0ZQK5</accession>
<accession>Q96IX3</accession>
<accession>Q9BRU4</accession>
<accession>Q9BTY9</accession>
<accession>Q9UC61</accession>
<protein>
    <recommendedName>
        <fullName>Peptidyl-prolyl cis-trans isomerase A</fullName>
        <shortName>PPIase A</shortName>
        <ecNumber evidence="2">5.2.1.8</ecNumber>
    </recommendedName>
    <alternativeName>
        <fullName>Cyclophilin A</fullName>
    </alternativeName>
    <alternativeName>
        <fullName>Cyclosporin A-binding protein</fullName>
    </alternativeName>
    <alternativeName>
        <fullName>Rotamase A</fullName>
    </alternativeName>
    <component>
        <recommendedName>
            <fullName>Peptidyl-prolyl cis-trans isomerase A, N-terminally processed</fullName>
        </recommendedName>
    </component>
</protein>
<gene>
    <name type="primary">PPIA</name>
    <name type="synonym">CYPA</name>
</gene>